<sequence>MANVTVVGAQWGDEGKGKIVDWLSNRADVVVRFQGGHNAGHTLVVDGKVYKLALLPSGVVQGKLSVIGNGVVVDPWHLLTEIDKIAEQGVAITPELLVLADNACLILPLHKDLDQAREAASTQKIGTTGRGIGPAYEDKVGRRAIRVADLADPEALKPKIERLLAHHGALRRGLGLPEADGAALFDQLMEVAPRVLAYAQPAWRLLDKAYKDGRKILFEGAQGALLDVDHGTYPFVTSSNTVAGQASAGSGMGPSATGYVLGIVKAYTTRVGEGPFAAELDDEVGKHLSTVGREVGVNTGRARRCGWFDAVLVRQSVAINGIHGVALTKLDVLDGLKTLKICVGYRIGDKVVDYLPAGMRDQRAAEPIYEEMEGWSESTAGARSFKDLNANAVKYVRRVEELIGAPVALLSTSPERDDTILMRDPFQG</sequence>
<feature type="chain" id="PRO_1000073940" description="Adenylosuccinate synthetase">
    <location>
        <begin position="1"/>
        <end position="428"/>
    </location>
</feature>
<feature type="active site" description="Proton acceptor" evidence="1">
    <location>
        <position position="13"/>
    </location>
</feature>
<feature type="active site" description="Proton donor" evidence="1">
    <location>
        <position position="41"/>
    </location>
</feature>
<feature type="binding site" evidence="1">
    <location>
        <begin position="12"/>
        <end position="18"/>
    </location>
    <ligand>
        <name>GTP</name>
        <dbReference type="ChEBI" id="CHEBI:37565"/>
    </ligand>
</feature>
<feature type="binding site" description="in other chain" evidence="1">
    <location>
        <begin position="13"/>
        <end position="16"/>
    </location>
    <ligand>
        <name>IMP</name>
        <dbReference type="ChEBI" id="CHEBI:58053"/>
        <note>ligand shared between dimeric partners</note>
    </ligand>
</feature>
<feature type="binding site" evidence="1">
    <location>
        <position position="13"/>
    </location>
    <ligand>
        <name>Mg(2+)</name>
        <dbReference type="ChEBI" id="CHEBI:18420"/>
    </ligand>
</feature>
<feature type="binding site" description="in other chain" evidence="1">
    <location>
        <begin position="38"/>
        <end position="41"/>
    </location>
    <ligand>
        <name>IMP</name>
        <dbReference type="ChEBI" id="CHEBI:58053"/>
        <note>ligand shared between dimeric partners</note>
    </ligand>
</feature>
<feature type="binding site" evidence="1">
    <location>
        <begin position="40"/>
        <end position="42"/>
    </location>
    <ligand>
        <name>GTP</name>
        <dbReference type="ChEBI" id="CHEBI:37565"/>
    </ligand>
</feature>
<feature type="binding site" evidence="1">
    <location>
        <position position="40"/>
    </location>
    <ligand>
        <name>Mg(2+)</name>
        <dbReference type="ChEBI" id="CHEBI:18420"/>
    </ligand>
</feature>
<feature type="binding site" description="in other chain" evidence="1">
    <location>
        <position position="128"/>
    </location>
    <ligand>
        <name>IMP</name>
        <dbReference type="ChEBI" id="CHEBI:58053"/>
        <note>ligand shared between dimeric partners</note>
    </ligand>
</feature>
<feature type="binding site" evidence="1">
    <location>
        <position position="142"/>
    </location>
    <ligand>
        <name>IMP</name>
        <dbReference type="ChEBI" id="CHEBI:58053"/>
        <note>ligand shared between dimeric partners</note>
    </ligand>
</feature>
<feature type="binding site" description="in other chain" evidence="1">
    <location>
        <position position="222"/>
    </location>
    <ligand>
        <name>IMP</name>
        <dbReference type="ChEBI" id="CHEBI:58053"/>
        <note>ligand shared between dimeric partners</note>
    </ligand>
</feature>
<feature type="binding site" description="in other chain" evidence="1">
    <location>
        <position position="237"/>
    </location>
    <ligand>
        <name>IMP</name>
        <dbReference type="ChEBI" id="CHEBI:58053"/>
        <note>ligand shared between dimeric partners</note>
    </ligand>
</feature>
<feature type="binding site" evidence="1">
    <location>
        <begin position="297"/>
        <end position="303"/>
    </location>
    <ligand>
        <name>substrate</name>
    </ligand>
</feature>
<feature type="binding site" description="in other chain" evidence="1">
    <location>
        <position position="301"/>
    </location>
    <ligand>
        <name>IMP</name>
        <dbReference type="ChEBI" id="CHEBI:58053"/>
        <note>ligand shared between dimeric partners</note>
    </ligand>
</feature>
<feature type="binding site" evidence="1">
    <location>
        <position position="303"/>
    </location>
    <ligand>
        <name>GTP</name>
        <dbReference type="ChEBI" id="CHEBI:37565"/>
    </ligand>
</feature>
<feature type="binding site" evidence="1">
    <location>
        <begin position="329"/>
        <end position="331"/>
    </location>
    <ligand>
        <name>GTP</name>
        <dbReference type="ChEBI" id="CHEBI:37565"/>
    </ligand>
</feature>
<feature type="binding site" evidence="1">
    <location>
        <begin position="411"/>
        <end position="413"/>
    </location>
    <ligand>
        <name>GTP</name>
        <dbReference type="ChEBI" id="CHEBI:37565"/>
    </ligand>
</feature>
<proteinExistence type="inferred from homology"/>
<evidence type="ECO:0000255" key="1">
    <source>
        <dbReference type="HAMAP-Rule" id="MF_00011"/>
    </source>
</evidence>
<organism>
    <name type="scientific">Caulobacter sp. (strain K31)</name>
    <dbReference type="NCBI Taxonomy" id="366602"/>
    <lineage>
        <taxon>Bacteria</taxon>
        <taxon>Pseudomonadati</taxon>
        <taxon>Pseudomonadota</taxon>
        <taxon>Alphaproteobacteria</taxon>
        <taxon>Caulobacterales</taxon>
        <taxon>Caulobacteraceae</taxon>
        <taxon>Caulobacter</taxon>
    </lineage>
</organism>
<dbReference type="EC" id="6.3.4.4" evidence="1"/>
<dbReference type="EMBL" id="CP000927">
    <property type="protein sequence ID" value="ABZ69791.1"/>
    <property type="molecule type" value="Genomic_DNA"/>
</dbReference>
<dbReference type="SMR" id="B0T890"/>
<dbReference type="STRING" id="366602.Caul_0658"/>
<dbReference type="KEGG" id="cak:Caul_0658"/>
<dbReference type="eggNOG" id="COG0104">
    <property type="taxonomic scope" value="Bacteria"/>
</dbReference>
<dbReference type="HOGENOM" id="CLU_029848_0_0_5"/>
<dbReference type="OrthoDB" id="9807553at2"/>
<dbReference type="UniPathway" id="UPA00075">
    <property type="reaction ID" value="UER00335"/>
</dbReference>
<dbReference type="GO" id="GO:0005737">
    <property type="term" value="C:cytoplasm"/>
    <property type="evidence" value="ECO:0007669"/>
    <property type="project" value="UniProtKB-SubCell"/>
</dbReference>
<dbReference type="GO" id="GO:0004019">
    <property type="term" value="F:adenylosuccinate synthase activity"/>
    <property type="evidence" value="ECO:0007669"/>
    <property type="project" value="UniProtKB-UniRule"/>
</dbReference>
<dbReference type="GO" id="GO:0005525">
    <property type="term" value="F:GTP binding"/>
    <property type="evidence" value="ECO:0007669"/>
    <property type="project" value="UniProtKB-UniRule"/>
</dbReference>
<dbReference type="GO" id="GO:0000287">
    <property type="term" value="F:magnesium ion binding"/>
    <property type="evidence" value="ECO:0007669"/>
    <property type="project" value="UniProtKB-UniRule"/>
</dbReference>
<dbReference type="GO" id="GO:0044208">
    <property type="term" value="P:'de novo' AMP biosynthetic process"/>
    <property type="evidence" value="ECO:0007669"/>
    <property type="project" value="UniProtKB-UniRule"/>
</dbReference>
<dbReference type="GO" id="GO:0046040">
    <property type="term" value="P:IMP metabolic process"/>
    <property type="evidence" value="ECO:0007669"/>
    <property type="project" value="TreeGrafter"/>
</dbReference>
<dbReference type="CDD" id="cd03108">
    <property type="entry name" value="AdSS"/>
    <property type="match status" value="1"/>
</dbReference>
<dbReference type="FunFam" id="1.10.300.10:FF:000001">
    <property type="entry name" value="Adenylosuccinate synthetase"/>
    <property type="match status" value="1"/>
</dbReference>
<dbReference type="FunFam" id="3.90.170.10:FF:000001">
    <property type="entry name" value="Adenylosuccinate synthetase"/>
    <property type="match status" value="1"/>
</dbReference>
<dbReference type="Gene3D" id="3.40.440.10">
    <property type="entry name" value="Adenylosuccinate Synthetase, subunit A, domain 1"/>
    <property type="match status" value="1"/>
</dbReference>
<dbReference type="Gene3D" id="1.10.300.10">
    <property type="entry name" value="Adenylosuccinate Synthetase, subunit A, domain 2"/>
    <property type="match status" value="1"/>
</dbReference>
<dbReference type="Gene3D" id="3.90.170.10">
    <property type="entry name" value="Adenylosuccinate Synthetase, subunit A, domain 3"/>
    <property type="match status" value="1"/>
</dbReference>
<dbReference type="HAMAP" id="MF_00011">
    <property type="entry name" value="Adenylosucc_synth"/>
    <property type="match status" value="1"/>
</dbReference>
<dbReference type="InterPro" id="IPR018220">
    <property type="entry name" value="Adenylosuccin_syn_GTP-bd"/>
</dbReference>
<dbReference type="InterPro" id="IPR033128">
    <property type="entry name" value="Adenylosuccin_syn_Lys_AS"/>
</dbReference>
<dbReference type="InterPro" id="IPR042109">
    <property type="entry name" value="Adenylosuccinate_synth_dom1"/>
</dbReference>
<dbReference type="InterPro" id="IPR042110">
    <property type="entry name" value="Adenylosuccinate_synth_dom2"/>
</dbReference>
<dbReference type="InterPro" id="IPR042111">
    <property type="entry name" value="Adenylosuccinate_synth_dom3"/>
</dbReference>
<dbReference type="InterPro" id="IPR001114">
    <property type="entry name" value="Adenylosuccinate_synthetase"/>
</dbReference>
<dbReference type="InterPro" id="IPR027417">
    <property type="entry name" value="P-loop_NTPase"/>
</dbReference>
<dbReference type="NCBIfam" id="NF002223">
    <property type="entry name" value="PRK01117.1"/>
    <property type="match status" value="1"/>
</dbReference>
<dbReference type="NCBIfam" id="TIGR00184">
    <property type="entry name" value="purA"/>
    <property type="match status" value="1"/>
</dbReference>
<dbReference type="PANTHER" id="PTHR11846">
    <property type="entry name" value="ADENYLOSUCCINATE SYNTHETASE"/>
    <property type="match status" value="1"/>
</dbReference>
<dbReference type="PANTHER" id="PTHR11846:SF0">
    <property type="entry name" value="ADENYLOSUCCINATE SYNTHETASE"/>
    <property type="match status" value="1"/>
</dbReference>
<dbReference type="Pfam" id="PF00709">
    <property type="entry name" value="Adenylsucc_synt"/>
    <property type="match status" value="1"/>
</dbReference>
<dbReference type="SMART" id="SM00788">
    <property type="entry name" value="Adenylsucc_synt"/>
    <property type="match status" value="1"/>
</dbReference>
<dbReference type="SUPFAM" id="SSF52540">
    <property type="entry name" value="P-loop containing nucleoside triphosphate hydrolases"/>
    <property type="match status" value="1"/>
</dbReference>
<dbReference type="PROSITE" id="PS01266">
    <property type="entry name" value="ADENYLOSUCCIN_SYN_1"/>
    <property type="match status" value="1"/>
</dbReference>
<dbReference type="PROSITE" id="PS00513">
    <property type="entry name" value="ADENYLOSUCCIN_SYN_2"/>
    <property type="match status" value="1"/>
</dbReference>
<name>PURA_CAUSK</name>
<accession>B0T890</accession>
<reference key="1">
    <citation type="submission" date="2008-01" db="EMBL/GenBank/DDBJ databases">
        <title>Complete sequence of chromosome of Caulobacter sp. K31.</title>
        <authorList>
            <consortium name="US DOE Joint Genome Institute"/>
            <person name="Copeland A."/>
            <person name="Lucas S."/>
            <person name="Lapidus A."/>
            <person name="Barry K."/>
            <person name="Glavina del Rio T."/>
            <person name="Dalin E."/>
            <person name="Tice H."/>
            <person name="Pitluck S."/>
            <person name="Bruce D."/>
            <person name="Goodwin L."/>
            <person name="Thompson L.S."/>
            <person name="Brettin T."/>
            <person name="Detter J.C."/>
            <person name="Han C."/>
            <person name="Schmutz J."/>
            <person name="Larimer F."/>
            <person name="Land M."/>
            <person name="Hauser L."/>
            <person name="Kyrpides N."/>
            <person name="Kim E."/>
            <person name="Stephens C."/>
            <person name="Richardson P."/>
        </authorList>
    </citation>
    <scope>NUCLEOTIDE SEQUENCE [LARGE SCALE GENOMIC DNA]</scope>
    <source>
        <strain>K31</strain>
    </source>
</reference>
<keyword id="KW-0963">Cytoplasm</keyword>
<keyword id="KW-0342">GTP-binding</keyword>
<keyword id="KW-0436">Ligase</keyword>
<keyword id="KW-0460">Magnesium</keyword>
<keyword id="KW-0479">Metal-binding</keyword>
<keyword id="KW-0547">Nucleotide-binding</keyword>
<keyword id="KW-0658">Purine biosynthesis</keyword>
<comment type="function">
    <text evidence="1">Plays an important role in the de novo pathway of purine nucleotide biosynthesis. Catalyzes the first committed step in the biosynthesis of AMP from IMP.</text>
</comment>
<comment type="catalytic activity">
    <reaction evidence="1">
        <text>IMP + L-aspartate + GTP = N(6)-(1,2-dicarboxyethyl)-AMP + GDP + phosphate + 2 H(+)</text>
        <dbReference type="Rhea" id="RHEA:15753"/>
        <dbReference type="ChEBI" id="CHEBI:15378"/>
        <dbReference type="ChEBI" id="CHEBI:29991"/>
        <dbReference type="ChEBI" id="CHEBI:37565"/>
        <dbReference type="ChEBI" id="CHEBI:43474"/>
        <dbReference type="ChEBI" id="CHEBI:57567"/>
        <dbReference type="ChEBI" id="CHEBI:58053"/>
        <dbReference type="ChEBI" id="CHEBI:58189"/>
        <dbReference type="EC" id="6.3.4.4"/>
    </reaction>
</comment>
<comment type="cofactor">
    <cofactor evidence="1">
        <name>Mg(2+)</name>
        <dbReference type="ChEBI" id="CHEBI:18420"/>
    </cofactor>
    <text evidence="1">Binds 1 Mg(2+) ion per subunit.</text>
</comment>
<comment type="pathway">
    <text evidence="1">Purine metabolism; AMP biosynthesis via de novo pathway; AMP from IMP: step 1/2.</text>
</comment>
<comment type="subunit">
    <text evidence="1">Homodimer.</text>
</comment>
<comment type="subcellular location">
    <subcellularLocation>
        <location evidence="1">Cytoplasm</location>
    </subcellularLocation>
</comment>
<comment type="similarity">
    <text evidence="1">Belongs to the adenylosuccinate synthetase family.</text>
</comment>
<protein>
    <recommendedName>
        <fullName evidence="1">Adenylosuccinate synthetase</fullName>
        <shortName evidence="1">AMPSase</shortName>
        <shortName evidence="1">AdSS</shortName>
        <ecNumber evidence="1">6.3.4.4</ecNumber>
    </recommendedName>
    <alternativeName>
        <fullName evidence="1">IMP--aspartate ligase</fullName>
    </alternativeName>
</protein>
<gene>
    <name evidence="1" type="primary">purA</name>
    <name type="ordered locus">Caul_0658</name>
</gene>